<proteinExistence type="evidence at protein level"/>
<comment type="function">
    <text>Inhibits the elongation phase of protein synthesis. It inactivates fungal ribosomes even more effectively than mammalian ribosomes and is thought to function as a constitutive antifungal agent in plants.</text>
</comment>
<comment type="catalytic activity">
    <reaction>
        <text>Endohydrolysis of the N-glycosidic bond at one specific adenosine on the 28S rRNA.</text>
        <dbReference type="EC" id="3.2.2.22"/>
    </reaction>
</comment>
<comment type="subcellular location">
    <subcellularLocation>
        <location>Cytoplasm</location>
    </subcellularLocation>
    <text>Starchy endosperm of mature seeds.</text>
</comment>
<comment type="miscellaneous">
    <text>Three similar RIP 30 isoforms I, II, and III have been described in Barley.</text>
</comment>
<comment type="similarity">
    <text evidence="2">Belongs to the ribosome-inactivating protein family. Type 1 RIP subfamily.</text>
</comment>
<sequence>MAAKMAKNVDKPLFTATFNVQASSADYATFIAGIRNKLRNPAHFSHNRPVLPPVEPNVPPSRWFHVVLKASPTSAGLTLAIRADNIYLEGFKSSDGTWWELTPGLIPGATYVGFGGTYRDLLGDTDKLTNVALGRQQLADAVTALHGRTKADKPSGPKQQQAREAVTTLLLMVNEATRFQTVSGFVAGLLHPKAVEKKSGKIGNEMKAQVNGWQDLSAALLKTDVKPPPGKSPAKFAPIEKMGVRTAVQAANTLGILLFVEVPGGLTVAKALELFHASGGK</sequence>
<reference key="1">
    <citation type="journal article" date="1991" name="J. Biol. Chem.">
        <title>Biochemical and molecular characterization of three barley seed proteins with antifungal properties.</title>
        <authorList>
            <person name="Leah R."/>
            <person name="Tommerup H."/>
            <person name="Svendsen I."/>
            <person name="Mundy J."/>
        </authorList>
    </citation>
    <scope>NUCLEOTIDE SEQUENCE [MRNA]</scope>
    <source>
        <strain>cv. Piggy</strain>
    </source>
</reference>
<gene>
    <name type="primary">RIP30</name>
</gene>
<dbReference type="EC" id="3.2.2.22"/>
<dbReference type="EMBL" id="M62905">
    <property type="protein sequence ID" value="AAA32950.1"/>
    <property type="molecule type" value="mRNA"/>
</dbReference>
<dbReference type="PIR" id="B38664">
    <property type="entry name" value="B38664"/>
</dbReference>
<dbReference type="PDB" id="4FB9">
    <property type="method" value="X-ray"/>
    <property type="resolution" value="1.75 A"/>
    <property type="chains" value="A/B/C/D=2-281"/>
</dbReference>
<dbReference type="PDB" id="4FBA">
    <property type="method" value="X-ray"/>
    <property type="resolution" value="1.85 A"/>
    <property type="chains" value="A/B/C/D=2-281"/>
</dbReference>
<dbReference type="PDB" id="4FBB">
    <property type="method" value="X-ray"/>
    <property type="resolution" value="1.80 A"/>
    <property type="chains" value="A/B/C/D=2-281"/>
</dbReference>
<dbReference type="PDB" id="4FBC">
    <property type="method" value="X-ray"/>
    <property type="resolution" value="1.70 A"/>
    <property type="chains" value="A/B/C/D=2-281"/>
</dbReference>
<dbReference type="PDB" id="4FBH">
    <property type="method" value="X-ray"/>
    <property type="resolution" value="2.30 A"/>
    <property type="chains" value="A=1-281"/>
</dbReference>
<dbReference type="PDBsum" id="4FB9"/>
<dbReference type="PDBsum" id="4FBA"/>
<dbReference type="PDBsum" id="4FBB"/>
<dbReference type="PDBsum" id="4FBC"/>
<dbReference type="PDBsum" id="4FBH"/>
<dbReference type="SMR" id="P22244"/>
<dbReference type="EvolutionaryTrace" id="P22244"/>
<dbReference type="ExpressionAtlas" id="P22244">
    <property type="expression patterns" value="baseline and differential"/>
</dbReference>
<dbReference type="GO" id="GO:0005737">
    <property type="term" value="C:cytoplasm"/>
    <property type="evidence" value="ECO:0007669"/>
    <property type="project" value="UniProtKB-SubCell"/>
</dbReference>
<dbReference type="GO" id="GO:0030598">
    <property type="term" value="F:rRNA N-glycosylase activity"/>
    <property type="evidence" value="ECO:0007669"/>
    <property type="project" value="UniProtKB-EC"/>
</dbReference>
<dbReference type="GO" id="GO:0090729">
    <property type="term" value="F:toxin activity"/>
    <property type="evidence" value="ECO:0007669"/>
    <property type="project" value="UniProtKB-KW"/>
</dbReference>
<dbReference type="GO" id="GO:0050832">
    <property type="term" value="P:defense response to fungus"/>
    <property type="evidence" value="ECO:0007669"/>
    <property type="project" value="UniProtKB-KW"/>
</dbReference>
<dbReference type="GO" id="GO:0031640">
    <property type="term" value="P:killing of cells of another organism"/>
    <property type="evidence" value="ECO:0007669"/>
    <property type="project" value="UniProtKB-KW"/>
</dbReference>
<dbReference type="GO" id="GO:0017148">
    <property type="term" value="P:negative regulation of translation"/>
    <property type="evidence" value="ECO:0007669"/>
    <property type="project" value="UniProtKB-KW"/>
</dbReference>
<dbReference type="Gene3D" id="3.40.420.10">
    <property type="entry name" value="Ricin (A subunit), domain 1"/>
    <property type="match status" value="1"/>
</dbReference>
<dbReference type="Gene3D" id="4.10.470.10">
    <property type="entry name" value="Ricin (A Subunit), domain 2"/>
    <property type="match status" value="1"/>
</dbReference>
<dbReference type="InterPro" id="IPR036041">
    <property type="entry name" value="Ribosome-inact_prot_sf"/>
</dbReference>
<dbReference type="InterPro" id="IPR017989">
    <property type="entry name" value="Ribosome_inactivat_1/2"/>
</dbReference>
<dbReference type="InterPro" id="IPR001574">
    <property type="entry name" value="Ribosome_inactivat_prot"/>
</dbReference>
<dbReference type="InterPro" id="IPR017988">
    <property type="entry name" value="Ribosome_inactivat_prot_CS"/>
</dbReference>
<dbReference type="InterPro" id="IPR016138">
    <property type="entry name" value="Ribosome_inactivat_prot_sub1"/>
</dbReference>
<dbReference type="InterPro" id="IPR016139">
    <property type="entry name" value="Ribosome_inactivat_prot_sub2"/>
</dbReference>
<dbReference type="PANTHER" id="PTHR33453">
    <property type="match status" value="1"/>
</dbReference>
<dbReference type="PANTHER" id="PTHR33453:SF27">
    <property type="entry name" value="RRNA N-GLYCOSYLASE"/>
    <property type="match status" value="1"/>
</dbReference>
<dbReference type="Pfam" id="PF00161">
    <property type="entry name" value="RIP"/>
    <property type="match status" value="1"/>
</dbReference>
<dbReference type="PRINTS" id="PR00396">
    <property type="entry name" value="SHIGARICIN"/>
</dbReference>
<dbReference type="SUPFAM" id="SSF56371">
    <property type="entry name" value="Ribosome inactivating proteins (RIP)"/>
    <property type="match status" value="1"/>
</dbReference>
<dbReference type="PROSITE" id="PS00275">
    <property type="entry name" value="SHIGA_RICIN"/>
    <property type="match status" value="1"/>
</dbReference>
<organism>
    <name type="scientific">Hordeum vulgare</name>
    <name type="common">Barley</name>
    <dbReference type="NCBI Taxonomy" id="4513"/>
    <lineage>
        <taxon>Eukaryota</taxon>
        <taxon>Viridiplantae</taxon>
        <taxon>Streptophyta</taxon>
        <taxon>Embryophyta</taxon>
        <taxon>Tracheophyta</taxon>
        <taxon>Spermatophyta</taxon>
        <taxon>Magnoliopsida</taxon>
        <taxon>Liliopsida</taxon>
        <taxon>Poales</taxon>
        <taxon>Poaceae</taxon>
        <taxon>BOP clade</taxon>
        <taxon>Pooideae</taxon>
        <taxon>Triticodae</taxon>
        <taxon>Triticeae</taxon>
        <taxon>Hordeinae</taxon>
        <taxon>Hordeum</taxon>
    </lineage>
</organism>
<feature type="initiator methionine" description="Removed" evidence="1">
    <location>
        <position position="1"/>
    </location>
</feature>
<feature type="chain" id="PRO_0000221401" description="Protein synthesis inhibitor I">
    <location>
        <begin position="2"/>
        <end position="281"/>
    </location>
</feature>
<feature type="active site" evidence="1">
    <location>
        <position position="175"/>
    </location>
</feature>
<feature type="modified residue" description="N-acetylalanine" evidence="1">
    <location>
        <position position="2"/>
    </location>
</feature>
<feature type="strand" evidence="3">
    <location>
        <begin position="15"/>
        <end position="19"/>
    </location>
</feature>
<feature type="helix" evidence="3">
    <location>
        <begin position="24"/>
        <end position="38"/>
    </location>
</feature>
<feature type="strand" evidence="3">
    <location>
        <begin position="48"/>
        <end position="50"/>
    </location>
</feature>
<feature type="strand" evidence="3">
    <location>
        <begin position="63"/>
        <end position="74"/>
    </location>
</feature>
<feature type="strand" evidence="3">
    <location>
        <begin position="77"/>
        <end position="82"/>
    </location>
</feature>
<feature type="turn" evidence="3">
    <location>
        <begin position="83"/>
        <end position="85"/>
    </location>
</feature>
<feature type="strand" evidence="3">
    <location>
        <begin position="88"/>
        <end position="92"/>
    </location>
</feature>
<feature type="strand" evidence="3">
    <location>
        <begin position="98"/>
        <end position="102"/>
    </location>
</feature>
<feature type="helix" evidence="3">
    <location>
        <begin position="118"/>
        <end position="122"/>
    </location>
</feature>
<feature type="helix" evidence="3">
    <location>
        <begin position="125"/>
        <end position="130"/>
    </location>
</feature>
<feature type="helix" evidence="3">
    <location>
        <begin position="135"/>
        <end position="146"/>
    </location>
</feature>
<feature type="helix" evidence="4">
    <location>
        <begin position="150"/>
        <end position="152"/>
    </location>
</feature>
<feature type="helix" evidence="3">
    <location>
        <begin position="156"/>
        <end position="172"/>
    </location>
</feature>
<feature type="helix" evidence="3">
    <location>
        <begin position="174"/>
        <end position="178"/>
    </location>
</feature>
<feature type="helix" evidence="3">
    <location>
        <begin position="180"/>
        <end position="189"/>
    </location>
</feature>
<feature type="strand" evidence="3">
    <location>
        <begin position="199"/>
        <end position="202"/>
    </location>
</feature>
<feature type="helix" evidence="3">
    <location>
        <begin position="204"/>
        <end position="210"/>
    </location>
</feature>
<feature type="helix" evidence="3">
    <location>
        <begin position="213"/>
        <end position="224"/>
    </location>
</feature>
<feature type="helix" evidence="3">
    <location>
        <begin position="240"/>
        <end position="242"/>
    </location>
</feature>
<feature type="helix" evidence="3">
    <location>
        <begin position="247"/>
        <end position="253"/>
    </location>
</feature>
<feature type="strand" evidence="3">
    <location>
        <begin position="254"/>
        <end position="257"/>
    </location>
</feature>
<feature type="helix" evidence="3">
    <location>
        <begin position="268"/>
        <end position="277"/>
    </location>
</feature>
<name>RIP1_HORVU</name>
<protein>
    <recommendedName>
        <fullName>Protein synthesis inhibitor I</fullName>
        <ecNumber>3.2.2.22</ecNumber>
    </recommendedName>
    <alternativeName>
        <fullName>Ribosome-inactivating protein I</fullName>
    </alternativeName>
    <alternativeName>
        <fullName>rRNA N-glycosidase</fullName>
    </alternativeName>
</protein>
<keyword id="KW-0002">3D-structure</keyword>
<keyword id="KW-0007">Acetylation</keyword>
<keyword id="KW-0929">Antimicrobial</keyword>
<keyword id="KW-0963">Cytoplasm</keyword>
<keyword id="KW-0295">Fungicide</keyword>
<keyword id="KW-0378">Hydrolase</keyword>
<keyword id="KW-0611">Plant defense</keyword>
<keyword id="KW-0652">Protein synthesis inhibitor</keyword>
<keyword id="KW-0800">Toxin</keyword>
<accession>P22244</accession>
<evidence type="ECO:0000250" key="1"/>
<evidence type="ECO:0000305" key="2"/>
<evidence type="ECO:0007829" key="3">
    <source>
        <dbReference type="PDB" id="4FBC"/>
    </source>
</evidence>
<evidence type="ECO:0007829" key="4">
    <source>
        <dbReference type="PDB" id="4FBH"/>
    </source>
</evidence>